<reference key="1">
    <citation type="journal article" date="2007" name="Nature">
        <title>Evolution of genes and genomes on the Drosophila phylogeny.</title>
        <authorList>
            <consortium name="Drosophila 12 genomes consortium"/>
        </authorList>
    </citation>
    <scope>NUCLEOTIDE SEQUENCE [LARGE SCALE GENOMIC DNA]</scope>
    <source>
        <strain>Tai18E2 / Tucson 14021-0261.01</strain>
    </source>
</reference>
<sequence>MSCPYAGNGNEHDDSAVPLTTEVGKIYGEYLMLDKLLDAQCMLSEEDKRPVHDEHLFIITHQAYELWFKQIIFEFDSIRDMLDAEVIDETKTLEIVKRLHRVVLILKLLVDQVPILETMTPLDFMDFRKYLAPASGFQSLQFRLIENKLGVLTEQRVRYNQKYSDVFSDEEARNSIRNSEKDPSLLELVQRWLERTPGLEESGFNFWAKFQESVDRFLAAQVQSAMEEPVEKAKNYRLMDIEKRREVYRSIFDPAVHDALVRRGDRRFSHRALQGAIMITFYRDEPRFSQPHQLLTLLMDIDSLITKWRYNHVIMVQRMIGSQQLGTGGSSGYQYLRSTLSDRYKVFLDLFNLSTFLIPREAIPPLDETIRKKLINKSV</sequence>
<dbReference type="EC" id="1.13.11.11" evidence="1"/>
<dbReference type="EMBL" id="CM000162">
    <property type="protein sequence ID" value="EDX02038.1"/>
    <property type="molecule type" value="Genomic_DNA"/>
</dbReference>
<dbReference type="SMR" id="B4PYW0"/>
<dbReference type="EnsemblMetazoa" id="FBtr0262415">
    <property type="protein sequence ID" value="FBpp0260907"/>
    <property type="gene ID" value="FBgn0022818"/>
</dbReference>
<dbReference type="EnsemblMetazoa" id="XM_002100894.3">
    <property type="protein sequence ID" value="XP_002100930.1"/>
    <property type="gene ID" value="LOC6525091"/>
</dbReference>
<dbReference type="GeneID" id="6525091"/>
<dbReference type="KEGG" id="dya:Dyak_GE15897"/>
<dbReference type="CTD" id="136040130"/>
<dbReference type="eggNOG" id="KOG3906">
    <property type="taxonomic scope" value="Eukaryota"/>
</dbReference>
<dbReference type="HOGENOM" id="CLU_045599_1_1_1"/>
<dbReference type="OMA" id="WRWRNDH"/>
<dbReference type="OrthoDB" id="447477at2759"/>
<dbReference type="PhylomeDB" id="B4PYW0"/>
<dbReference type="UniPathway" id="UPA00271"/>
<dbReference type="UniPathway" id="UPA00333">
    <property type="reaction ID" value="UER00453"/>
</dbReference>
<dbReference type="Proteomes" id="UP000002282">
    <property type="component" value="Chromosome X"/>
</dbReference>
<dbReference type="GO" id="GO:0020037">
    <property type="term" value="F:heme binding"/>
    <property type="evidence" value="ECO:0000250"/>
    <property type="project" value="UniProtKB"/>
</dbReference>
<dbReference type="GO" id="GO:0046872">
    <property type="term" value="F:metal ion binding"/>
    <property type="evidence" value="ECO:0007669"/>
    <property type="project" value="UniProtKB-KW"/>
</dbReference>
<dbReference type="GO" id="GO:0004833">
    <property type="term" value="F:tryptophan 2,3-dioxygenase activity"/>
    <property type="evidence" value="ECO:0000250"/>
    <property type="project" value="UniProtKB"/>
</dbReference>
<dbReference type="GO" id="GO:0019442">
    <property type="term" value="P:L-tryptophan catabolic process to acetyl-CoA"/>
    <property type="evidence" value="ECO:0007669"/>
    <property type="project" value="TreeGrafter"/>
</dbReference>
<dbReference type="GO" id="GO:0019441">
    <property type="term" value="P:L-tryptophan catabolic process to kynurenine"/>
    <property type="evidence" value="ECO:0000250"/>
    <property type="project" value="UniProtKB"/>
</dbReference>
<dbReference type="GO" id="GO:0006727">
    <property type="term" value="P:ommochrome biosynthetic process"/>
    <property type="evidence" value="ECO:0007669"/>
    <property type="project" value="UniProtKB-UniRule"/>
</dbReference>
<dbReference type="GO" id="GO:0051289">
    <property type="term" value="P:protein homotetramerization"/>
    <property type="evidence" value="ECO:0007669"/>
    <property type="project" value="EnsemblMetazoa"/>
</dbReference>
<dbReference type="FunFam" id="1.10.287.3810:FF:000001">
    <property type="entry name" value="Tryptophan 2,3-dioxygenase"/>
    <property type="match status" value="1"/>
</dbReference>
<dbReference type="Gene3D" id="1.10.287.3810">
    <property type="match status" value="1"/>
</dbReference>
<dbReference type="Gene3D" id="1.20.58.480">
    <property type="match status" value="1"/>
</dbReference>
<dbReference type="HAMAP" id="MF_01972">
    <property type="entry name" value="T23O"/>
    <property type="match status" value="1"/>
</dbReference>
<dbReference type="InterPro" id="IPR037217">
    <property type="entry name" value="Trp/Indoleamine_2_3_dOase-like"/>
</dbReference>
<dbReference type="InterPro" id="IPR004981">
    <property type="entry name" value="Trp_2_3_dOase"/>
</dbReference>
<dbReference type="PANTHER" id="PTHR10138">
    <property type="entry name" value="TRYPTOPHAN 2,3-DIOXYGENASE"/>
    <property type="match status" value="1"/>
</dbReference>
<dbReference type="PANTHER" id="PTHR10138:SF0">
    <property type="entry name" value="TRYPTOPHAN 2,3-DIOXYGENASE"/>
    <property type="match status" value="1"/>
</dbReference>
<dbReference type="Pfam" id="PF03301">
    <property type="entry name" value="Trp_dioxygenase"/>
    <property type="match status" value="1"/>
</dbReference>
<dbReference type="SUPFAM" id="SSF140959">
    <property type="entry name" value="Indolic compounds 2,3-dioxygenase-like"/>
    <property type="match status" value="1"/>
</dbReference>
<evidence type="ECO:0000255" key="1">
    <source>
        <dbReference type="HAMAP-Rule" id="MF_03020"/>
    </source>
</evidence>
<name>T23O_DROYA</name>
<keyword id="KW-0223">Dioxygenase</keyword>
<keyword id="KW-0349">Heme</keyword>
<keyword id="KW-0408">Iron</keyword>
<keyword id="KW-0479">Metal-binding</keyword>
<keyword id="KW-0560">Oxidoreductase</keyword>
<keyword id="KW-0823">Tryptophan catabolism</keyword>
<gene>
    <name evidence="1" type="primary">v</name>
    <name type="ORF">GE15897</name>
</gene>
<proteinExistence type="inferred from homology"/>
<comment type="function">
    <text evidence="1">Heme-dependent dioxygenase that catalyzes the oxidative cleavage of the L-tryptophan (L-Trp) pyrrole ring and converts L-tryptophan to N-formyl-L-kynurenine. Catalyzes the oxidative cleavage of the indole moiety.</text>
</comment>
<comment type="catalytic activity">
    <reaction evidence="1">
        <text>L-tryptophan + O2 = N-formyl-L-kynurenine</text>
        <dbReference type="Rhea" id="RHEA:24536"/>
        <dbReference type="ChEBI" id="CHEBI:15379"/>
        <dbReference type="ChEBI" id="CHEBI:57912"/>
        <dbReference type="ChEBI" id="CHEBI:58629"/>
        <dbReference type="EC" id="1.13.11.11"/>
    </reaction>
</comment>
<comment type="cofactor">
    <cofactor evidence="1">
        <name>heme</name>
        <dbReference type="ChEBI" id="CHEBI:30413"/>
    </cofactor>
    <text evidence="1">Binds 1 heme group per subunit.</text>
</comment>
<comment type="pathway">
    <text evidence="1">Amino-acid degradation; L-tryptophan degradation via kynurenine pathway; L-kynurenine from L-tryptophan: step 1/2.</text>
</comment>
<comment type="pathway">
    <text evidence="1">Pigment biosynthesis; ommochrome biosynthesis.</text>
</comment>
<comment type="subunit">
    <text evidence="1">Homotetramer. Dimer of dimers.</text>
</comment>
<comment type="similarity">
    <text evidence="1">Belongs to the tryptophan 2,3-dioxygenase family.</text>
</comment>
<feature type="chain" id="PRO_0000360884" description="Tryptophan 2,3-dioxygenase">
    <location>
        <begin position="1"/>
        <end position="379"/>
    </location>
</feature>
<feature type="binding site" evidence="1">
    <location>
        <begin position="57"/>
        <end position="61"/>
    </location>
    <ligand>
        <name>substrate</name>
    </ligand>
</feature>
<feature type="binding site" evidence="1">
    <location>
        <position position="128"/>
    </location>
    <ligand>
        <name>substrate</name>
    </ligand>
</feature>
<feature type="binding site" description="axial binding residue" evidence="1">
    <location>
        <position position="312"/>
    </location>
    <ligand>
        <name>heme</name>
        <dbReference type="ChEBI" id="CHEBI:30413"/>
    </ligand>
    <ligandPart>
        <name>Fe</name>
        <dbReference type="ChEBI" id="CHEBI:18248"/>
    </ligandPart>
</feature>
<feature type="binding site" evidence="1">
    <location>
        <position position="327"/>
    </location>
    <ligand>
        <name>substrate</name>
    </ligand>
</feature>
<accession>B4PYW0</accession>
<organism>
    <name type="scientific">Drosophila yakuba</name>
    <name type="common">Fruit fly</name>
    <dbReference type="NCBI Taxonomy" id="7245"/>
    <lineage>
        <taxon>Eukaryota</taxon>
        <taxon>Metazoa</taxon>
        <taxon>Ecdysozoa</taxon>
        <taxon>Arthropoda</taxon>
        <taxon>Hexapoda</taxon>
        <taxon>Insecta</taxon>
        <taxon>Pterygota</taxon>
        <taxon>Neoptera</taxon>
        <taxon>Endopterygota</taxon>
        <taxon>Diptera</taxon>
        <taxon>Brachycera</taxon>
        <taxon>Muscomorpha</taxon>
        <taxon>Ephydroidea</taxon>
        <taxon>Drosophilidae</taxon>
        <taxon>Drosophila</taxon>
        <taxon>Sophophora</taxon>
    </lineage>
</organism>
<protein>
    <recommendedName>
        <fullName evidence="1">Tryptophan 2,3-dioxygenase</fullName>
        <shortName evidence="1">TDO</shortName>
        <ecNumber evidence="1">1.13.11.11</ecNumber>
    </recommendedName>
    <alternativeName>
        <fullName evidence="1">Protein vermilion</fullName>
    </alternativeName>
    <alternativeName>
        <fullName evidence="1">Tryptamin 2,3-dioxygenase</fullName>
    </alternativeName>
    <alternativeName>
        <fullName evidence="1">Tryptophan oxygenase</fullName>
        <shortName evidence="1">TO</shortName>
        <shortName evidence="1">TRPO</shortName>
    </alternativeName>
    <alternativeName>
        <fullName evidence="1">Tryptophan pyrrolase</fullName>
    </alternativeName>
    <alternativeName>
        <fullName evidence="1">Tryptophanase</fullName>
    </alternativeName>
</protein>